<sequence length="199" mass="22123">MTGFKQHKGIVVPLDSANVDTDAIIPKQFLQKVNRIGFGKHLFHDWRFLDDAGQQPNPEFVLNQPQFAGASILLARENFGCGSSREHAPWALADYGFKTIIAPSFADIFYGNAINNGMVPVRLKEEEVDALFQLVAAQPGIEIEVDLEANQVRADSLCFGFEIDEFRRYCLLNGLDAIGLTLQHEAAISAFEAKQPSWI</sequence>
<proteinExistence type="inferred from homology"/>
<reference key="1">
    <citation type="journal article" date="2006" name="J. Bacteriol.">
        <title>Genome sequence of Aeromonas hydrophila ATCC 7966T: jack of all trades.</title>
        <authorList>
            <person name="Seshadri R."/>
            <person name="Joseph S.W."/>
            <person name="Chopra A.K."/>
            <person name="Sha J."/>
            <person name="Shaw J."/>
            <person name="Graf J."/>
            <person name="Haft D.H."/>
            <person name="Wu M."/>
            <person name="Ren Q."/>
            <person name="Rosovitz M.J."/>
            <person name="Madupu R."/>
            <person name="Tallon L."/>
            <person name="Kim M."/>
            <person name="Jin S."/>
            <person name="Vuong H."/>
            <person name="Stine O.C."/>
            <person name="Ali A."/>
            <person name="Horneman A.J."/>
            <person name="Heidelberg J.F."/>
        </authorList>
    </citation>
    <scope>NUCLEOTIDE SEQUENCE [LARGE SCALE GENOMIC DNA]</scope>
    <source>
        <strain>ATCC 7966 / DSM 30187 / BCRC 13018 / CCUG 14551 / JCM 1027 / KCTC 2358 / NCIMB 9240 / NCTC 8049</strain>
    </source>
</reference>
<feature type="chain" id="PRO_1000063724" description="3-isopropylmalate dehydratase small subunit">
    <location>
        <begin position="1"/>
        <end position="199"/>
    </location>
</feature>
<name>LEUD_AERHH</name>
<organism>
    <name type="scientific">Aeromonas hydrophila subsp. hydrophila (strain ATCC 7966 / DSM 30187 / BCRC 13018 / CCUG 14551 / JCM 1027 / KCTC 2358 / NCIMB 9240 / NCTC 8049)</name>
    <dbReference type="NCBI Taxonomy" id="380703"/>
    <lineage>
        <taxon>Bacteria</taxon>
        <taxon>Pseudomonadati</taxon>
        <taxon>Pseudomonadota</taxon>
        <taxon>Gammaproteobacteria</taxon>
        <taxon>Aeromonadales</taxon>
        <taxon>Aeromonadaceae</taxon>
        <taxon>Aeromonas</taxon>
    </lineage>
</organism>
<evidence type="ECO:0000255" key="1">
    <source>
        <dbReference type="HAMAP-Rule" id="MF_01031"/>
    </source>
</evidence>
<keyword id="KW-0028">Amino-acid biosynthesis</keyword>
<keyword id="KW-0100">Branched-chain amino acid biosynthesis</keyword>
<keyword id="KW-0432">Leucine biosynthesis</keyword>
<keyword id="KW-0456">Lyase</keyword>
<keyword id="KW-1185">Reference proteome</keyword>
<gene>
    <name evidence="1" type="primary">leuD</name>
    <name type="ordered locus">AHA_0879</name>
</gene>
<dbReference type="EC" id="4.2.1.33" evidence="1"/>
<dbReference type="EMBL" id="CP000462">
    <property type="protein sequence ID" value="ABK39361.1"/>
    <property type="molecule type" value="Genomic_DNA"/>
</dbReference>
<dbReference type="RefSeq" id="WP_011704819.1">
    <property type="nucleotide sequence ID" value="NC_008570.1"/>
</dbReference>
<dbReference type="RefSeq" id="YP_855420.1">
    <property type="nucleotide sequence ID" value="NC_008570.1"/>
</dbReference>
<dbReference type="SMR" id="A0KGM6"/>
<dbReference type="STRING" id="380703.AHA_0879"/>
<dbReference type="EnsemblBacteria" id="ABK39361">
    <property type="protein sequence ID" value="ABK39361"/>
    <property type="gene ID" value="AHA_0879"/>
</dbReference>
<dbReference type="GeneID" id="4488954"/>
<dbReference type="KEGG" id="aha:AHA_0879"/>
<dbReference type="PATRIC" id="fig|380703.7.peg.880"/>
<dbReference type="eggNOG" id="COG0066">
    <property type="taxonomic scope" value="Bacteria"/>
</dbReference>
<dbReference type="HOGENOM" id="CLU_081378_0_3_6"/>
<dbReference type="OrthoDB" id="9777465at2"/>
<dbReference type="UniPathway" id="UPA00048">
    <property type="reaction ID" value="UER00071"/>
</dbReference>
<dbReference type="Proteomes" id="UP000000756">
    <property type="component" value="Chromosome"/>
</dbReference>
<dbReference type="GO" id="GO:0009316">
    <property type="term" value="C:3-isopropylmalate dehydratase complex"/>
    <property type="evidence" value="ECO:0007669"/>
    <property type="project" value="InterPro"/>
</dbReference>
<dbReference type="GO" id="GO:0003861">
    <property type="term" value="F:3-isopropylmalate dehydratase activity"/>
    <property type="evidence" value="ECO:0007669"/>
    <property type="project" value="UniProtKB-UniRule"/>
</dbReference>
<dbReference type="GO" id="GO:0009098">
    <property type="term" value="P:L-leucine biosynthetic process"/>
    <property type="evidence" value="ECO:0007669"/>
    <property type="project" value="UniProtKB-UniRule"/>
</dbReference>
<dbReference type="CDD" id="cd01577">
    <property type="entry name" value="IPMI_Swivel"/>
    <property type="match status" value="1"/>
</dbReference>
<dbReference type="FunFam" id="3.20.19.10:FF:000003">
    <property type="entry name" value="3-isopropylmalate dehydratase small subunit"/>
    <property type="match status" value="1"/>
</dbReference>
<dbReference type="Gene3D" id="3.20.19.10">
    <property type="entry name" value="Aconitase, domain 4"/>
    <property type="match status" value="1"/>
</dbReference>
<dbReference type="HAMAP" id="MF_01031">
    <property type="entry name" value="LeuD_type1"/>
    <property type="match status" value="1"/>
</dbReference>
<dbReference type="InterPro" id="IPR004431">
    <property type="entry name" value="3-IsopropMal_deHydase_ssu"/>
</dbReference>
<dbReference type="InterPro" id="IPR015928">
    <property type="entry name" value="Aconitase/3IPM_dehydase_swvl"/>
</dbReference>
<dbReference type="InterPro" id="IPR000573">
    <property type="entry name" value="AconitaseA/IPMdHydase_ssu_swvl"/>
</dbReference>
<dbReference type="InterPro" id="IPR033940">
    <property type="entry name" value="IPMI_Swivel"/>
</dbReference>
<dbReference type="InterPro" id="IPR050075">
    <property type="entry name" value="LeuD"/>
</dbReference>
<dbReference type="NCBIfam" id="TIGR00171">
    <property type="entry name" value="leuD"/>
    <property type="match status" value="1"/>
</dbReference>
<dbReference type="NCBIfam" id="NF002458">
    <property type="entry name" value="PRK01641.1"/>
    <property type="match status" value="1"/>
</dbReference>
<dbReference type="PANTHER" id="PTHR43345:SF5">
    <property type="entry name" value="3-ISOPROPYLMALATE DEHYDRATASE SMALL SUBUNIT"/>
    <property type="match status" value="1"/>
</dbReference>
<dbReference type="PANTHER" id="PTHR43345">
    <property type="entry name" value="3-ISOPROPYLMALATE DEHYDRATASE SMALL SUBUNIT 2-RELATED-RELATED"/>
    <property type="match status" value="1"/>
</dbReference>
<dbReference type="Pfam" id="PF00694">
    <property type="entry name" value="Aconitase_C"/>
    <property type="match status" value="1"/>
</dbReference>
<dbReference type="SUPFAM" id="SSF52016">
    <property type="entry name" value="LeuD/IlvD-like"/>
    <property type="match status" value="1"/>
</dbReference>
<protein>
    <recommendedName>
        <fullName evidence="1">3-isopropylmalate dehydratase small subunit</fullName>
        <ecNumber evidence="1">4.2.1.33</ecNumber>
    </recommendedName>
    <alternativeName>
        <fullName evidence="1">Alpha-IPM isomerase</fullName>
        <shortName evidence="1">IPMI</shortName>
    </alternativeName>
    <alternativeName>
        <fullName evidence="1">Isopropylmalate isomerase</fullName>
    </alternativeName>
</protein>
<comment type="function">
    <text evidence="1">Catalyzes the isomerization between 2-isopropylmalate and 3-isopropylmalate, via the formation of 2-isopropylmaleate.</text>
</comment>
<comment type="catalytic activity">
    <reaction evidence="1">
        <text>(2R,3S)-3-isopropylmalate = (2S)-2-isopropylmalate</text>
        <dbReference type="Rhea" id="RHEA:32287"/>
        <dbReference type="ChEBI" id="CHEBI:1178"/>
        <dbReference type="ChEBI" id="CHEBI:35121"/>
        <dbReference type="EC" id="4.2.1.33"/>
    </reaction>
</comment>
<comment type="pathway">
    <text evidence="1">Amino-acid biosynthesis; L-leucine biosynthesis; L-leucine from 3-methyl-2-oxobutanoate: step 2/4.</text>
</comment>
<comment type="subunit">
    <text evidence="1">Heterodimer of LeuC and LeuD.</text>
</comment>
<comment type="similarity">
    <text evidence="1">Belongs to the LeuD family. LeuD type 1 subfamily.</text>
</comment>
<accession>A0KGM6</accession>